<gene>
    <name type="primary">murB</name>
    <name type="synonym">yijB</name>
    <name type="ordered locus">b3972</name>
    <name type="ordered locus">JW3940</name>
</gene>
<dbReference type="EC" id="1.3.1.98"/>
<dbReference type="EMBL" id="M10123">
    <property type="protein sequence ID" value="AAA23519.1"/>
    <property type="molecule type" value="Genomic_DNA"/>
</dbReference>
<dbReference type="EMBL" id="L14557">
    <property type="protein sequence ID" value="AAA24185.1"/>
    <property type="molecule type" value="Genomic_DNA"/>
</dbReference>
<dbReference type="EMBL" id="U00006">
    <property type="protein sequence ID" value="AAC43074.1"/>
    <property type="molecule type" value="Genomic_DNA"/>
</dbReference>
<dbReference type="EMBL" id="U00096">
    <property type="protein sequence ID" value="AAC76950.1"/>
    <property type="molecule type" value="Genomic_DNA"/>
</dbReference>
<dbReference type="EMBL" id="AP009048">
    <property type="protein sequence ID" value="BAE77343.1"/>
    <property type="molecule type" value="Genomic_DNA"/>
</dbReference>
<dbReference type="EMBL" id="V00348">
    <property type="status" value="NOT_ANNOTATED_CDS"/>
    <property type="molecule type" value="Genomic_DNA"/>
</dbReference>
<dbReference type="PIR" id="A24029">
    <property type="entry name" value="QQECB8"/>
</dbReference>
<dbReference type="RefSeq" id="NP_418403.1">
    <property type="nucleotide sequence ID" value="NC_000913.3"/>
</dbReference>
<dbReference type="RefSeq" id="WP_001016699.1">
    <property type="nucleotide sequence ID" value="NZ_SSZK01000084.1"/>
</dbReference>
<dbReference type="PDB" id="1MBB">
    <property type="method" value="X-ray"/>
    <property type="resolution" value="2.30 A"/>
    <property type="chains" value="A=1-342"/>
</dbReference>
<dbReference type="PDB" id="1MBT">
    <property type="method" value="X-ray"/>
    <property type="resolution" value="3.00 A"/>
    <property type="chains" value="A=1-342"/>
</dbReference>
<dbReference type="PDB" id="1UXY">
    <property type="method" value="X-ray"/>
    <property type="resolution" value="1.80 A"/>
    <property type="chains" value="A=3-342"/>
</dbReference>
<dbReference type="PDB" id="2MBR">
    <property type="method" value="X-ray"/>
    <property type="resolution" value="1.80 A"/>
    <property type="chains" value="A=3-342"/>
</dbReference>
<dbReference type="PDB" id="2Q85">
    <property type="method" value="X-ray"/>
    <property type="resolution" value="2.51 A"/>
    <property type="chains" value="A=1-342"/>
</dbReference>
<dbReference type="PDBsum" id="1MBB"/>
<dbReference type="PDBsum" id="1MBT"/>
<dbReference type="PDBsum" id="1UXY"/>
<dbReference type="PDBsum" id="2MBR"/>
<dbReference type="PDBsum" id="2Q85"/>
<dbReference type="SMR" id="P08373"/>
<dbReference type="BioGRID" id="4262982">
    <property type="interactions" value="597"/>
</dbReference>
<dbReference type="BioGRID" id="852766">
    <property type="interactions" value="2"/>
</dbReference>
<dbReference type="DIP" id="DIP-10277N"/>
<dbReference type="FunCoup" id="P08373">
    <property type="interactions" value="659"/>
</dbReference>
<dbReference type="IntAct" id="P08373">
    <property type="interactions" value="12"/>
</dbReference>
<dbReference type="STRING" id="511145.b3972"/>
<dbReference type="BindingDB" id="P08373"/>
<dbReference type="ChEMBL" id="CHEMBL5526"/>
<dbReference type="DrugBank" id="DB07296">
    <property type="generic name" value="(5Z)-3-(4-CHLOROPHENYL)-4-HYDROXY-5-(1-NAPHTHYLMETHYLENE)FURAN-2(5H)-ONE"/>
</dbReference>
<dbReference type="DrugBank" id="DB03147">
    <property type="generic name" value="Flavin adenine dinucleotide"/>
</dbReference>
<dbReference type="jPOST" id="P08373"/>
<dbReference type="PaxDb" id="511145-b3972"/>
<dbReference type="EnsemblBacteria" id="AAC76950">
    <property type="protein sequence ID" value="AAC76950"/>
    <property type="gene ID" value="b3972"/>
</dbReference>
<dbReference type="GeneID" id="948470"/>
<dbReference type="KEGG" id="ecj:JW3940"/>
<dbReference type="KEGG" id="eco:b3972"/>
<dbReference type="KEGG" id="ecoc:C3026_21460"/>
<dbReference type="PATRIC" id="fig|1411691.4.peg.2736"/>
<dbReference type="EchoBASE" id="EB1190"/>
<dbReference type="eggNOG" id="COG0812">
    <property type="taxonomic scope" value="Bacteria"/>
</dbReference>
<dbReference type="HOGENOM" id="CLU_035304_0_0_6"/>
<dbReference type="InParanoid" id="P08373"/>
<dbReference type="OMA" id="APLTWFR"/>
<dbReference type="OrthoDB" id="9804753at2"/>
<dbReference type="PhylomeDB" id="P08373"/>
<dbReference type="BioCyc" id="EcoCyc:UDPNACETYLMURAMATEDEHYDROG-MONOMER"/>
<dbReference type="BioCyc" id="MetaCyc:UDPNACETYLMURAMATEDEHYDROG-MONOMER"/>
<dbReference type="SABIO-RK" id="P08373"/>
<dbReference type="UniPathway" id="UPA00219"/>
<dbReference type="EvolutionaryTrace" id="P08373"/>
<dbReference type="PRO" id="PR:P08373"/>
<dbReference type="Proteomes" id="UP000000625">
    <property type="component" value="Chromosome"/>
</dbReference>
<dbReference type="GO" id="GO:0005737">
    <property type="term" value="C:cytoplasm"/>
    <property type="evidence" value="ECO:0000314"/>
    <property type="project" value="EcoliWiki"/>
</dbReference>
<dbReference type="GO" id="GO:0005829">
    <property type="term" value="C:cytosol"/>
    <property type="evidence" value="ECO:0000314"/>
    <property type="project" value="EcoCyc"/>
</dbReference>
<dbReference type="GO" id="GO:0071949">
    <property type="term" value="F:FAD binding"/>
    <property type="evidence" value="ECO:0000314"/>
    <property type="project" value="EcoCyc"/>
</dbReference>
<dbReference type="GO" id="GO:0050660">
    <property type="term" value="F:flavin adenine dinucleotide binding"/>
    <property type="evidence" value="ECO:0000314"/>
    <property type="project" value="EcoliWiki"/>
</dbReference>
<dbReference type="GO" id="GO:0008762">
    <property type="term" value="F:UDP-N-acetylmuramate dehydrogenase activity"/>
    <property type="evidence" value="ECO:0000314"/>
    <property type="project" value="EcoCyc"/>
</dbReference>
<dbReference type="GO" id="GO:0051301">
    <property type="term" value="P:cell division"/>
    <property type="evidence" value="ECO:0007669"/>
    <property type="project" value="UniProtKB-KW"/>
</dbReference>
<dbReference type="GO" id="GO:0071555">
    <property type="term" value="P:cell wall organization"/>
    <property type="evidence" value="ECO:0000315"/>
    <property type="project" value="EcoliWiki"/>
</dbReference>
<dbReference type="GO" id="GO:0009252">
    <property type="term" value="P:peptidoglycan biosynthetic process"/>
    <property type="evidence" value="ECO:0000315"/>
    <property type="project" value="EcoliWiki"/>
</dbReference>
<dbReference type="GO" id="GO:0008360">
    <property type="term" value="P:regulation of cell shape"/>
    <property type="evidence" value="ECO:0000315"/>
    <property type="project" value="EcoliWiki"/>
</dbReference>
<dbReference type="FunFam" id="3.30.465.10:FF:000018">
    <property type="entry name" value="UDP-N-acetylenolpyruvoylglucosamine reductase"/>
    <property type="match status" value="1"/>
</dbReference>
<dbReference type="FunFam" id="3.90.78.10:FF:000002">
    <property type="entry name" value="UDP-N-acetylenolpyruvoylglucosamine reductase"/>
    <property type="match status" value="1"/>
</dbReference>
<dbReference type="Gene3D" id="3.30.465.10">
    <property type="match status" value="1"/>
</dbReference>
<dbReference type="Gene3D" id="3.90.78.10">
    <property type="entry name" value="UDP-N-acetylenolpyruvoylglucosamine reductase, C-terminal domain"/>
    <property type="match status" value="1"/>
</dbReference>
<dbReference type="Gene3D" id="3.30.43.10">
    <property type="entry name" value="Uridine Diphospho-n-acetylenolpyruvylglucosamine Reductase, domain 2"/>
    <property type="match status" value="1"/>
</dbReference>
<dbReference type="HAMAP" id="MF_00037">
    <property type="entry name" value="MurB"/>
    <property type="match status" value="1"/>
</dbReference>
<dbReference type="InterPro" id="IPR016166">
    <property type="entry name" value="FAD-bd_PCMH"/>
</dbReference>
<dbReference type="InterPro" id="IPR036318">
    <property type="entry name" value="FAD-bd_PCMH-like_sf"/>
</dbReference>
<dbReference type="InterPro" id="IPR016167">
    <property type="entry name" value="FAD-bd_PCMH_sub1"/>
</dbReference>
<dbReference type="InterPro" id="IPR016169">
    <property type="entry name" value="FAD-bd_PCMH_sub2"/>
</dbReference>
<dbReference type="InterPro" id="IPR003170">
    <property type="entry name" value="MurB"/>
</dbReference>
<dbReference type="InterPro" id="IPR011601">
    <property type="entry name" value="MurB_C"/>
</dbReference>
<dbReference type="InterPro" id="IPR036635">
    <property type="entry name" value="MurB_C_sf"/>
</dbReference>
<dbReference type="InterPro" id="IPR006094">
    <property type="entry name" value="Oxid_FAD_bind_N"/>
</dbReference>
<dbReference type="NCBIfam" id="TIGR00179">
    <property type="entry name" value="murB"/>
    <property type="match status" value="1"/>
</dbReference>
<dbReference type="NCBIfam" id="NF000755">
    <property type="entry name" value="PRK00046.1"/>
    <property type="match status" value="1"/>
</dbReference>
<dbReference type="NCBIfam" id="NF010478">
    <property type="entry name" value="PRK13903.1"/>
    <property type="match status" value="1"/>
</dbReference>
<dbReference type="PANTHER" id="PTHR21071">
    <property type="entry name" value="UDP-N-ACETYLENOLPYRUVOYLGLUCOSAMINE REDUCTASE"/>
    <property type="match status" value="1"/>
</dbReference>
<dbReference type="PANTHER" id="PTHR21071:SF4">
    <property type="entry name" value="UDP-N-ACETYLENOLPYRUVOYLGLUCOSAMINE REDUCTASE"/>
    <property type="match status" value="1"/>
</dbReference>
<dbReference type="Pfam" id="PF01565">
    <property type="entry name" value="FAD_binding_4"/>
    <property type="match status" value="1"/>
</dbReference>
<dbReference type="Pfam" id="PF02873">
    <property type="entry name" value="MurB_C"/>
    <property type="match status" value="1"/>
</dbReference>
<dbReference type="SUPFAM" id="SSF56176">
    <property type="entry name" value="FAD-binding/transporter-associated domain-like"/>
    <property type="match status" value="1"/>
</dbReference>
<dbReference type="SUPFAM" id="SSF56194">
    <property type="entry name" value="Uridine diphospho-N-Acetylenolpyruvylglucosamine reductase, MurB, C-terminal domain"/>
    <property type="match status" value="1"/>
</dbReference>
<dbReference type="PROSITE" id="PS51387">
    <property type="entry name" value="FAD_PCMH"/>
    <property type="match status" value="1"/>
</dbReference>
<name>MURB_ECOLI</name>
<proteinExistence type="evidence at protein level"/>
<protein>
    <recommendedName>
        <fullName>UDP-N-acetylenolpyruvoylglucosamine reductase</fullName>
        <ecNumber>1.3.1.98</ecNumber>
    </recommendedName>
    <alternativeName>
        <fullName>UDP-N-acetylmuramate dehydrogenase</fullName>
    </alternativeName>
</protein>
<reference key="1">
    <citation type="journal article" date="1985" name="Gene">
        <title>Nucleotide sequence of the birA gene encoding the biotin operon repressor and biotin holoenzyme synthetase functions of Escherichia coli.</title>
        <authorList>
            <person name="Howard P.K."/>
            <person name="Shaw J."/>
            <person name="Otsuka A.J."/>
        </authorList>
    </citation>
    <scope>NUCLEOTIDE SEQUENCE [GENOMIC DNA]</scope>
    <source>
        <strain>B</strain>
    </source>
</reference>
<reference key="2">
    <citation type="journal article" date="1992" name="J. Bacteriol.">
        <title>Cloning and identification of the Escherichia coli murB DNA sequence, which encodes UDP-N-acetylenolpyruvoylglucosamine reductase.</title>
        <authorList>
            <person name="Pucci M.J."/>
            <person name="Discotto L.F."/>
            <person name="Dougherty T.J."/>
        </authorList>
    </citation>
    <scope>NUCLEOTIDE SEQUENCE [GENOMIC DNA]</scope>
    <scope>CHARACTERIZATION</scope>
</reference>
<reference key="3">
    <citation type="journal article" date="1993" name="Nucleic Acids Res.">
        <title>Analysis of the Escherichia coli genome. IV. DNA sequence of the region from 89.2 to 92.8 minutes.</title>
        <authorList>
            <person name="Blattner F.R."/>
            <person name="Burland V.D."/>
            <person name="Plunkett G. III"/>
            <person name="Sofia H.J."/>
            <person name="Daniels D.L."/>
        </authorList>
    </citation>
    <scope>NUCLEOTIDE SEQUENCE [LARGE SCALE GENOMIC DNA]</scope>
    <source>
        <strain>K12 / MG1655 / ATCC 47076</strain>
    </source>
</reference>
<reference key="4">
    <citation type="journal article" date="1997" name="Science">
        <title>The complete genome sequence of Escherichia coli K-12.</title>
        <authorList>
            <person name="Blattner F.R."/>
            <person name="Plunkett G. III"/>
            <person name="Bloch C.A."/>
            <person name="Perna N.T."/>
            <person name="Burland V."/>
            <person name="Riley M."/>
            <person name="Collado-Vides J."/>
            <person name="Glasner J.D."/>
            <person name="Rode C.K."/>
            <person name="Mayhew G.F."/>
            <person name="Gregor J."/>
            <person name="Davis N.W."/>
            <person name="Kirkpatrick H.A."/>
            <person name="Goeden M.A."/>
            <person name="Rose D.J."/>
            <person name="Mau B."/>
            <person name="Shao Y."/>
        </authorList>
    </citation>
    <scope>NUCLEOTIDE SEQUENCE [LARGE SCALE GENOMIC DNA]</scope>
    <source>
        <strain>K12 / MG1655 / ATCC 47076</strain>
    </source>
</reference>
<reference key="5">
    <citation type="journal article" date="2006" name="Mol. Syst. Biol.">
        <title>Highly accurate genome sequences of Escherichia coli K-12 strains MG1655 and W3110.</title>
        <authorList>
            <person name="Hayashi K."/>
            <person name="Morooka N."/>
            <person name="Yamamoto Y."/>
            <person name="Fujita K."/>
            <person name="Isono K."/>
            <person name="Choi S."/>
            <person name="Ohtsubo E."/>
            <person name="Baba T."/>
            <person name="Wanner B.L."/>
            <person name="Mori H."/>
            <person name="Horiuchi T."/>
        </authorList>
    </citation>
    <scope>NUCLEOTIDE SEQUENCE [LARGE SCALE GENOMIC DNA]</scope>
    <source>
        <strain>K12 / W3110 / ATCC 27325 / DSM 5911</strain>
    </source>
</reference>
<reference key="6">
    <citation type="journal article" date="1981" name="J. Mol. Biol.">
        <title>Gene organization and primary structure of a ribosomal RNA operon from Escherichia coli.</title>
        <authorList>
            <person name="Brosius J."/>
            <person name="Dull T.J."/>
            <person name="Sleeter D.D."/>
            <person name="Noller H.F."/>
        </authorList>
    </citation>
    <scope>NUCLEOTIDE SEQUENCE [GENOMIC DNA] OF 1-197</scope>
</reference>
<reference key="7">
    <citation type="journal article" date="1993" name="Biochemistry">
        <title>Overexpression, purification, and mechanistic study of UDP-N-acetylenolpyruvylglucosamine reductase.</title>
        <authorList>
            <person name="Benson T.E."/>
            <person name="Marquardt J.L."/>
            <person name="Marquardt A.C."/>
            <person name="Etzkorn F.A."/>
            <person name="Walsh C.T."/>
        </authorList>
    </citation>
    <scope>CHARACTERIZATION</scope>
</reference>
<reference key="8">
    <citation type="journal article" date="1996" name="Structure">
        <title>The structure of the substrate-free form of MurB, an essential enzyme for the synthesis of bacterial cell walls.</title>
        <authorList>
            <person name="Benson T.E."/>
            <person name="Walsh C.T."/>
            <person name="Hogle J.M."/>
        </authorList>
    </citation>
    <scope>X-RAY CRYSTALLOGRAPHY (3.0 ANGSTROMS)</scope>
</reference>
<reference key="9">
    <citation type="journal article" date="1997" name="Biochemistry">
        <title>X-ray crystal structures of the S229A mutant and wild-type MurB in the presence of the substrate enolpyruvyl-UDP-N-acetylglucosamine at 1.8-A resolution.</title>
        <authorList>
            <person name="Benson T.E."/>
            <person name="Walsh C.T."/>
            <person name="Hogle J.M."/>
        </authorList>
    </citation>
    <scope>X-RAY CRYSTALLOGRAPHY (1.8 ANGSTROMS)</scope>
</reference>
<reference key="10">
    <citation type="journal article" date="1997" name="J. Mol. Biol.">
        <title>Characterization of NADP+ binding to perdeuterated MurB: backbone atom NMR assignments and chemical-shift changes.</title>
        <authorList>
            <person name="Constantine K.L."/>
            <person name="Mueller L."/>
            <person name="Goldfarb V."/>
            <person name="Wittekind M."/>
            <person name="Metzler W.J."/>
            <person name="Yanchunas J. Jr."/>
            <person name="Robertson J.G."/>
            <person name="Malley M.F."/>
            <person name="Friedrichs M.S."/>
            <person name="Farmer B.T. II"/>
        </authorList>
    </citation>
    <scope>STRUCTURE BY NMR</scope>
</reference>
<evidence type="ECO:0000305" key="1"/>
<evidence type="ECO:0007829" key="2">
    <source>
        <dbReference type="PDB" id="1UXY"/>
    </source>
</evidence>
<evidence type="ECO:0007829" key="3">
    <source>
        <dbReference type="PDB" id="2MBR"/>
    </source>
</evidence>
<evidence type="ECO:0007829" key="4">
    <source>
        <dbReference type="PDB" id="2Q85"/>
    </source>
</evidence>
<keyword id="KW-0002">3D-structure</keyword>
<keyword id="KW-0131">Cell cycle</keyword>
<keyword id="KW-0132">Cell division</keyword>
<keyword id="KW-0133">Cell shape</keyword>
<keyword id="KW-0961">Cell wall biogenesis/degradation</keyword>
<keyword id="KW-0963">Cytoplasm</keyword>
<keyword id="KW-0274">FAD</keyword>
<keyword id="KW-0285">Flavoprotein</keyword>
<keyword id="KW-0521">NADP</keyword>
<keyword id="KW-0560">Oxidoreductase</keyword>
<keyword id="KW-0573">Peptidoglycan synthesis</keyword>
<keyword id="KW-1185">Reference proteome</keyword>
<feature type="chain" id="PRO_0000179207" description="UDP-N-acetylenolpyruvoylglucosamine reductase">
    <location>
        <begin position="1"/>
        <end position="342"/>
    </location>
</feature>
<feature type="domain" description="FAD-binding PCMH-type">
    <location>
        <begin position="13"/>
        <end position="183"/>
    </location>
</feature>
<feature type="active site">
    <location>
        <position position="159"/>
    </location>
</feature>
<feature type="active site" description="Proton donor">
    <location>
        <position position="229"/>
    </location>
</feature>
<feature type="active site">
    <location>
        <position position="325"/>
    </location>
</feature>
<feature type="binding site">
    <location>
        <position position="190"/>
    </location>
    <ligand>
        <name>substrate</name>
    </ligand>
</feature>
<feature type="sequence conflict" description="In Ref. 2; AAA24185." evidence="1" ref="2">
    <original>Y</original>
    <variation>H</variation>
    <location>
        <position position="35"/>
    </location>
</feature>
<feature type="sequence conflict" description="In Ref. 2; AAA24185." evidence="1" ref="2">
    <original>S</original>
    <variation>C</variation>
    <location>
        <position position="138"/>
    </location>
</feature>
<feature type="sequence conflict" description="In Ref. 2; AAA24185." evidence="1" ref="2">
    <original>K</original>
    <variation>E</variation>
    <location>
        <position position="242"/>
    </location>
</feature>
<feature type="sequence conflict" description="In Ref. 2; AAA24185." evidence="1" ref="2">
    <original>I</original>
    <variation>M</variation>
    <location>
        <position position="279"/>
    </location>
</feature>
<feature type="helix" evidence="2">
    <location>
        <begin position="6"/>
        <end position="8"/>
    </location>
</feature>
<feature type="strand" evidence="2">
    <location>
        <begin position="16"/>
        <end position="25"/>
    </location>
</feature>
<feature type="helix" evidence="2">
    <location>
        <begin position="26"/>
        <end position="38"/>
    </location>
</feature>
<feature type="strand" evidence="2">
    <location>
        <begin position="43"/>
        <end position="48"/>
    </location>
</feature>
<feature type="strand" evidence="2">
    <location>
        <begin position="52"/>
        <end position="54"/>
    </location>
</feature>
<feature type="strand" evidence="2">
    <location>
        <begin position="58"/>
        <end position="65"/>
    </location>
</feature>
<feature type="strand" evidence="2">
    <location>
        <begin position="70"/>
        <end position="74"/>
    </location>
</feature>
<feature type="strand" evidence="2">
    <location>
        <begin position="76"/>
        <end position="84"/>
    </location>
</feature>
<feature type="helix" evidence="2">
    <location>
        <begin position="89"/>
        <end position="98"/>
    </location>
</feature>
<feature type="helix" evidence="2">
    <location>
        <begin position="105"/>
        <end position="107"/>
    </location>
</feature>
<feature type="helix" evidence="2">
    <location>
        <begin position="114"/>
        <end position="116"/>
    </location>
</feature>
<feature type="turn" evidence="2">
    <location>
        <begin position="117"/>
        <end position="121"/>
    </location>
</feature>
<feature type="helix" evidence="2">
    <location>
        <begin position="129"/>
        <end position="131"/>
    </location>
</feature>
<feature type="strand" evidence="2">
    <location>
        <begin position="133"/>
        <end position="140"/>
    </location>
</feature>
<feature type="turn" evidence="2">
    <location>
        <begin position="141"/>
        <end position="143"/>
    </location>
</feature>
<feature type="strand" evidence="2">
    <location>
        <begin position="146"/>
        <end position="150"/>
    </location>
</feature>
<feature type="helix" evidence="2">
    <location>
        <begin position="152"/>
        <end position="154"/>
    </location>
</feature>
<feature type="helix" evidence="2">
    <location>
        <begin position="162"/>
        <end position="164"/>
    </location>
</feature>
<feature type="turn" evidence="2">
    <location>
        <begin position="165"/>
        <end position="170"/>
    </location>
</feature>
<feature type="strand" evidence="2">
    <location>
        <begin position="171"/>
        <end position="183"/>
    </location>
</feature>
<feature type="helix" evidence="2">
    <location>
        <begin position="191"/>
        <end position="195"/>
    </location>
</feature>
<feature type="turn" evidence="2">
    <location>
        <begin position="198"/>
        <end position="200"/>
    </location>
</feature>
<feature type="helix" evidence="2">
    <location>
        <begin position="203"/>
        <end position="217"/>
    </location>
</feature>
<feature type="turn" evidence="2">
    <location>
        <begin position="221"/>
        <end position="223"/>
    </location>
</feature>
<feature type="strand" evidence="2">
    <location>
        <begin position="226"/>
        <end position="231"/>
    </location>
</feature>
<feature type="helix" evidence="2">
    <location>
        <begin position="238"/>
        <end position="247"/>
    </location>
</feature>
<feature type="strand" evidence="2">
    <location>
        <begin position="253"/>
        <end position="255"/>
    </location>
</feature>
<feature type="strand" evidence="2">
    <location>
        <begin position="261"/>
        <end position="263"/>
    </location>
</feature>
<feature type="helix" evidence="2">
    <location>
        <begin position="265"/>
        <end position="271"/>
    </location>
</feature>
<feature type="strand" evidence="2">
    <location>
        <begin position="282"/>
        <end position="284"/>
    </location>
</feature>
<feature type="strand" evidence="4">
    <location>
        <begin position="286"/>
        <end position="288"/>
    </location>
</feature>
<feature type="strand" evidence="2">
    <location>
        <begin position="291"/>
        <end position="294"/>
    </location>
</feature>
<feature type="helix" evidence="2">
    <location>
        <begin position="300"/>
        <end position="318"/>
    </location>
</feature>
<feature type="strand" evidence="2">
    <location>
        <begin position="326"/>
        <end position="330"/>
    </location>
</feature>
<feature type="strand" evidence="3">
    <location>
        <begin position="333"/>
        <end position="335"/>
    </location>
</feature>
<feature type="helix" evidence="2">
    <location>
        <begin position="337"/>
        <end position="341"/>
    </location>
</feature>
<sequence>MNHSLKPWNTFGIDHNAQHIVCAEDEQQLLNAWQYATAEGQPVLILGEGSNVLFLEDYRGTVIINRIKGIEIHDEPDAWYLHVGAGENWHRLVKYTLQEGMPGLENLALIPGCVGSSPIQNIGAYGVELQRVCAYVDSVELATGKQVRLTAKECRFGYRDSIFKHEYQDRFAIVAVGLRLPKEWQPVLTYGDLTRLDPTTVTPQQVFNAVCHMRTTKLPDPKVNGNAGSFFKNPVVSAETAKALLSQFPTAPNYPQADGSVKLAAGWLIDQCQLKGMQIGGAAVHRQQALVLINEDNAKSEDVVQLAHHVRQKVGEKFNVWLEPEVRFIGASGEVSAVETIS</sequence>
<organism>
    <name type="scientific">Escherichia coli (strain K12)</name>
    <dbReference type="NCBI Taxonomy" id="83333"/>
    <lineage>
        <taxon>Bacteria</taxon>
        <taxon>Pseudomonadati</taxon>
        <taxon>Pseudomonadota</taxon>
        <taxon>Gammaproteobacteria</taxon>
        <taxon>Enterobacterales</taxon>
        <taxon>Enterobacteriaceae</taxon>
        <taxon>Escherichia</taxon>
    </lineage>
</organism>
<accession>P08373</accession>
<accession>Q2M8R3</accession>
<comment type="function">
    <text>Cell wall formation.</text>
</comment>
<comment type="catalytic activity">
    <reaction>
        <text>UDP-N-acetyl-alpha-D-muramate + NADP(+) = UDP-N-acetyl-3-O-(1-carboxyvinyl)-alpha-D-glucosamine + NADPH + H(+)</text>
        <dbReference type="Rhea" id="RHEA:12248"/>
        <dbReference type="ChEBI" id="CHEBI:15378"/>
        <dbReference type="ChEBI" id="CHEBI:57783"/>
        <dbReference type="ChEBI" id="CHEBI:58349"/>
        <dbReference type="ChEBI" id="CHEBI:68483"/>
        <dbReference type="ChEBI" id="CHEBI:70757"/>
        <dbReference type="EC" id="1.3.1.98"/>
    </reaction>
</comment>
<comment type="cofactor">
    <cofactor>
        <name>FAD</name>
        <dbReference type="ChEBI" id="CHEBI:57692"/>
    </cofactor>
</comment>
<comment type="pathway">
    <text>Cell wall biogenesis; peptidoglycan biosynthesis.</text>
</comment>
<comment type="subunit">
    <text>Monomer.</text>
</comment>
<comment type="subcellular location">
    <subcellularLocation>
        <location evidence="1">Cytoplasm</location>
    </subcellularLocation>
</comment>
<comment type="similarity">
    <text evidence="1">Belongs to the MurB family.</text>
</comment>